<name>RS19_CARHZ</name>
<accession>Q3A9S0</accession>
<organism>
    <name type="scientific">Carboxydothermus hydrogenoformans (strain ATCC BAA-161 / DSM 6008 / Z-2901)</name>
    <dbReference type="NCBI Taxonomy" id="246194"/>
    <lineage>
        <taxon>Bacteria</taxon>
        <taxon>Bacillati</taxon>
        <taxon>Bacillota</taxon>
        <taxon>Clostridia</taxon>
        <taxon>Thermoanaerobacterales</taxon>
        <taxon>Thermoanaerobacteraceae</taxon>
        <taxon>Carboxydothermus</taxon>
    </lineage>
</organism>
<evidence type="ECO:0000255" key="1">
    <source>
        <dbReference type="HAMAP-Rule" id="MF_00531"/>
    </source>
</evidence>
<evidence type="ECO:0000305" key="2"/>
<keyword id="KW-1185">Reference proteome</keyword>
<keyword id="KW-0687">Ribonucleoprotein</keyword>
<keyword id="KW-0689">Ribosomal protein</keyword>
<keyword id="KW-0694">RNA-binding</keyword>
<keyword id="KW-0699">rRNA-binding</keyword>
<gene>
    <name evidence="1" type="primary">rpsS</name>
    <name type="ordered locus">CHY_2305</name>
</gene>
<proteinExistence type="inferred from homology"/>
<dbReference type="EMBL" id="CP000141">
    <property type="protein sequence ID" value="ABB15019.1"/>
    <property type="molecule type" value="Genomic_DNA"/>
</dbReference>
<dbReference type="RefSeq" id="WP_011345187.1">
    <property type="nucleotide sequence ID" value="NC_007503.1"/>
</dbReference>
<dbReference type="SMR" id="Q3A9S0"/>
<dbReference type="FunCoup" id="Q3A9S0">
    <property type="interactions" value="412"/>
</dbReference>
<dbReference type="STRING" id="246194.CHY_2305"/>
<dbReference type="KEGG" id="chy:CHY_2305"/>
<dbReference type="eggNOG" id="COG0185">
    <property type="taxonomic scope" value="Bacteria"/>
</dbReference>
<dbReference type="HOGENOM" id="CLU_144911_0_1_9"/>
<dbReference type="InParanoid" id="Q3A9S0"/>
<dbReference type="OrthoDB" id="9797833at2"/>
<dbReference type="Proteomes" id="UP000002706">
    <property type="component" value="Chromosome"/>
</dbReference>
<dbReference type="GO" id="GO:0005737">
    <property type="term" value="C:cytoplasm"/>
    <property type="evidence" value="ECO:0007669"/>
    <property type="project" value="UniProtKB-ARBA"/>
</dbReference>
<dbReference type="GO" id="GO:0015935">
    <property type="term" value="C:small ribosomal subunit"/>
    <property type="evidence" value="ECO:0007669"/>
    <property type="project" value="InterPro"/>
</dbReference>
<dbReference type="GO" id="GO:0019843">
    <property type="term" value="F:rRNA binding"/>
    <property type="evidence" value="ECO:0007669"/>
    <property type="project" value="UniProtKB-UniRule"/>
</dbReference>
<dbReference type="GO" id="GO:0003735">
    <property type="term" value="F:structural constituent of ribosome"/>
    <property type="evidence" value="ECO:0007669"/>
    <property type="project" value="InterPro"/>
</dbReference>
<dbReference type="GO" id="GO:0000028">
    <property type="term" value="P:ribosomal small subunit assembly"/>
    <property type="evidence" value="ECO:0007669"/>
    <property type="project" value="TreeGrafter"/>
</dbReference>
<dbReference type="GO" id="GO:0006412">
    <property type="term" value="P:translation"/>
    <property type="evidence" value="ECO:0007669"/>
    <property type="project" value="UniProtKB-UniRule"/>
</dbReference>
<dbReference type="FunFam" id="3.30.860.10:FF:000001">
    <property type="entry name" value="30S ribosomal protein S19"/>
    <property type="match status" value="1"/>
</dbReference>
<dbReference type="Gene3D" id="3.30.860.10">
    <property type="entry name" value="30s Ribosomal Protein S19, Chain A"/>
    <property type="match status" value="1"/>
</dbReference>
<dbReference type="HAMAP" id="MF_00531">
    <property type="entry name" value="Ribosomal_uS19"/>
    <property type="match status" value="1"/>
</dbReference>
<dbReference type="InterPro" id="IPR002222">
    <property type="entry name" value="Ribosomal_uS19"/>
</dbReference>
<dbReference type="InterPro" id="IPR005732">
    <property type="entry name" value="Ribosomal_uS19_bac-type"/>
</dbReference>
<dbReference type="InterPro" id="IPR020934">
    <property type="entry name" value="Ribosomal_uS19_CS"/>
</dbReference>
<dbReference type="InterPro" id="IPR023575">
    <property type="entry name" value="Ribosomal_uS19_SF"/>
</dbReference>
<dbReference type="NCBIfam" id="TIGR01050">
    <property type="entry name" value="rpsS_bact"/>
    <property type="match status" value="1"/>
</dbReference>
<dbReference type="PANTHER" id="PTHR11880">
    <property type="entry name" value="RIBOSOMAL PROTEIN S19P FAMILY MEMBER"/>
    <property type="match status" value="1"/>
</dbReference>
<dbReference type="PANTHER" id="PTHR11880:SF8">
    <property type="entry name" value="SMALL RIBOSOMAL SUBUNIT PROTEIN US19M"/>
    <property type="match status" value="1"/>
</dbReference>
<dbReference type="Pfam" id="PF00203">
    <property type="entry name" value="Ribosomal_S19"/>
    <property type="match status" value="1"/>
</dbReference>
<dbReference type="PIRSF" id="PIRSF002144">
    <property type="entry name" value="Ribosomal_S19"/>
    <property type="match status" value="1"/>
</dbReference>
<dbReference type="PRINTS" id="PR00975">
    <property type="entry name" value="RIBOSOMALS19"/>
</dbReference>
<dbReference type="SUPFAM" id="SSF54570">
    <property type="entry name" value="Ribosomal protein S19"/>
    <property type="match status" value="1"/>
</dbReference>
<dbReference type="PROSITE" id="PS00323">
    <property type="entry name" value="RIBOSOMAL_S19"/>
    <property type="match status" value="1"/>
</dbReference>
<protein>
    <recommendedName>
        <fullName evidence="1">Small ribosomal subunit protein uS19</fullName>
    </recommendedName>
    <alternativeName>
        <fullName evidence="2">30S ribosomal protein S19</fullName>
    </alternativeName>
</protein>
<comment type="function">
    <text evidence="1">Protein S19 forms a complex with S13 that binds strongly to the 16S ribosomal RNA.</text>
</comment>
<comment type="similarity">
    <text evidence="1">Belongs to the universal ribosomal protein uS19 family.</text>
</comment>
<sequence>MGRSLKKGPYCDPKLLKKIEELNAKGEKRVIKTWSRRSTIFPQMVGHTIAVYDGRKHVPVYITEEMVGHKLGEFAPTRTFRGHGDHTERSTALK</sequence>
<feature type="chain" id="PRO_0000265341" description="Small ribosomal subunit protein uS19">
    <location>
        <begin position="1"/>
        <end position="94"/>
    </location>
</feature>
<reference key="1">
    <citation type="journal article" date="2005" name="PLoS Genet.">
        <title>Life in hot carbon monoxide: the complete genome sequence of Carboxydothermus hydrogenoformans Z-2901.</title>
        <authorList>
            <person name="Wu M."/>
            <person name="Ren Q."/>
            <person name="Durkin A.S."/>
            <person name="Daugherty S.C."/>
            <person name="Brinkac L.M."/>
            <person name="Dodson R.J."/>
            <person name="Madupu R."/>
            <person name="Sullivan S.A."/>
            <person name="Kolonay J.F."/>
            <person name="Nelson W.C."/>
            <person name="Tallon L.J."/>
            <person name="Jones K.M."/>
            <person name="Ulrich L.E."/>
            <person name="Gonzalez J.M."/>
            <person name="Zhulin I.B."/>
            <person name="Robb F.T."/>
            <person name="Eisen J.A."/>
        </authorList>
    </citation>
    <scope>NUCLEOTIDE SEQUENCE [LARGE SCALE GENOMIC DNA]</scope>
    <source>
        <strain>ATCC BAA-161 / DSM 6008 / Z-2901</strain>
    </source>
</reference>